<protein>
    <recommendedName>
        <fullName evidence="1">Co-chaperonin GroES</fullName>
    </recommendedName>
    <alternativeName>
        <fullName evidence="1">10 kDa chaperonin</fullName>
    </alternativeName>
    <alternativeName>
        <fullName evidence="1">Chaperonin-10</fullName>
        <shortName evidence="1">Cpn10</shortName>
    </alternativeName>
</protein>
<name>CH10_SODGM</name>
<sequence>MKIRPLHDRVIVKRKEIEAKSAGGIVLTGSAAGKSTRGEVLAVGRGRILENGEVKALDVKVGDIVIFNDGYGVKVEKIDNDEVLIMSESDILAIVEK</sequence>
<accession>Q2NW95</accession>
<proteinExistence type="inferred from homology"/>
<dbReference type="EMBL" id="AP008232">
    <property type="protein sequence ID" value="BAE73580.1"/>
    <property type="molecule type" value="Genomic_DNA"/>
</dbReference>
<dbReference type="RefSeq" id="WP_011410168.1">
    <property type="nucleotide sequence ID" value="NC_007712.1"/>
</dbReference>
<dbReference type="SMR" id="Q2NW95"/>
<dbReference type="STRING" id="343509.SG0305"/>
<dbReference type="KEGG" id="sgl:SG0305"/>
<dbReference type="eggNOG" id="COG0234">
    <property type="taxonomic scope" value="Bacteria"/>
</dbReference>
<dbReference type="HOGENOM" id="CLU_132825_1_1_6"/>
<dbReference type="OrthoDB" id="9806791at2"/>
<dbReference type="Proteomes" id="UP000001932">
    <property type="component" value="Chromosome"/>
</dbReference>
<dbReference type="GO" id="GO:0005737">
    <property type="term" value="C:cytoplasm"/>
    <property type="evidence" value="ECO:0007669"/>
    <property type="project" value="UniProtKB-SubCell"/>
</dbReference>
<dbReference type="GO" id="GO:0005524">
    <property type="term" value="F:ATP binding"/>
    <property type="evidence" value="ECO:0007669"/>
    <property type="project" value="InterPro"/>
</dbReference>
<dbReference type="GO" id="GO:0046872">
    <property type="term" value="F:metal ion binding"/>
    <property type="evidence" value="ECO:0007669"/>
    <property type="project" value="TreeGrafter"/>
</dbReference>
<dbReference type="GO" id="GO:0044183">
    <property type="term" value="F:protein folding chaperone"/>
    <property type="evidence" value="ECO:0007669"/>
    <property type="project" value="InterPro"/>
</dbReference>
<dbReference type="GO" id="GO:0051087">
    <property type="term" value="F:protein-folding chaperone binding"/>
    <property type="evidence" value="ECO:0007669"/>
    <property type="project" value="TreeGrafter"/>
</dbReference>
<dbReference type="GO" id="GO:0051082">
    <property type="term" value="F:unfolded protein binding"/>
    <property type="evidence" value="ECO:0007669"/>
    <property type="project" value="TreeGrafter"/>
</dbReference>
<dbReference type="GO" id="GO:0051085">
    <property type="term" value="P:chaperone cofactor-dependent protein refolding"/>
    <property type="evidence" value="ECO:0007669"/>
    <property type="project" value="TreeGrafter"/>
</dbReference>
<dbReference type="CDD" id="cd00320">
    <property type="entry name" value="cpn10"/>
    <property type="match status" value="1"/>
</dbReference>
<dbReference type="FunFam" id="2.30.33.40:FF:000001">
    <property type="entry name" value="10 kDa chaperonin"/>
    <property type="match status" value="1"/>
</dbReference>
<dbReference type="Gene3D" id="2.30.33.40">
    <property type="entry name" value="GroES chaperonin"/>
    <property type="match status" value="1"/>
</dbReference>
<dbReference type="HAMAP" id="MF_00580">
    <property type="entry name" value="CH10"/>
    <property type="match status" value="1"/>
</dbReference>
<dbReference type="InterPro" id="IPR020818">
    <property type="entry name" value="Chaperonin_GroES"/>
</dbReference>
<dbReference type="InterPro" id="IPR037124">
    <property type="entry name" value="Chaperonin_GroES_sf"/>
</dbReference>
<dbReference type="InterPro" id="IPR018369">
    <property type="entry name" value="Chaprnonin_Cpn10_CS"/>
</dbReference>
<dbReference type="InterPro" id="IPR011032">
    <property type="entry name" value="GroES-like_sf"/>
</dbReference>
<dbReference type="NCBIfam" id="NF001526">
    <property type="entry name" value="PRK00364.1-1"/>
    <property type="match status" value="1"/>
</dbReference>
<dbReference type="NCBIfam" id="NF001527">
    <property type="entry name" value="PRK00364.1-2"/>
    <property type="match status" value="1"/>
</dbReference>
<dbReference type="PANTHER" id="PTHR10772">
    <property type="entry name" value="10 KDA HEAT SHOCK PROTEIN"/>
    <property type="match status" value="1"/>
</dbReference>
<dbReference type="PANTHER" id="PTHR10772:SF58">
    <property type="entry name" value="CO-CHAPERONIN GROES"/>
    <property type="match status" value="1"/>
</dbReference>
<dbReference type="Pfam" id="PF00166">
    <property type="entry name" value="Cpn10"/>
    <property type="match status" value="1"/>
</dbReference>
<dbReference type="PRINTS" id="PR00297">
    <property type="entry name" value="CHAPERONIN10"/>
</dbReference>
<dbReference type="SMART" id="SM00883">
    <property type="entry name" value="Cpn10"/>
    <property type="match status" value="1"/>
</dbReference>
<dbReference type="SUPFAM" id="SSF50129">
    <property type="entry name" value="GroES-like"/>
    <property type="match status" value="1"/>
</dbReference>
<dbReference type="PROSITE" id="PS00681">
    <property type="entry name" value="CHAPERONINS_CPN10"/>
    <property type="match status" value="1"/>
</dbReference>
<evidence type="ECO:0000255" key="1">
    <source>
        <dbReference type="HAMAP-Rule" id="MF_00580"/>
    </source>
</evidence>
<reference key="1">
    <citation type="journal article" date="2006" name="Genome Res.">
        <title>Massive genome erosion and functional adaptations provide insights into the symbiotic lifestyle of Sodalis glossinidius in the tsetse host.</title>
        <authorList>
            <person name="Toh H."/>
            <person name="Weiss B.L."/>
            <person name="Perkin S.A.H."/>
            <person name="Yamashita A."/>
            <person name="Oshima K."/>
            <person name="Hattori M."/>
            <person name="Aksoy S."/>
        </authorList>
    </citation>
    <scope>NUCLEOTIDE SEQUENCE [LARGE SCALE GENOMIC DNA]</scope>
    <source>
        <strain>morsitans</strain>
    </source>
</reference>
<gene>
    <name evidence="1" type="primary">groES</name>
    <name evidence="1" type="synonym">groS</name>
    <name type="ordered locus">SG0305</name>
</gene>
<keyword id="KW-0143">Chaperone</keyword>
<keyword id="KW-0963">Cytoplasm</keyword>
<organism>
    <name type="scientific">Sodalis glossinidius (strain morsitans)</name>
    <dbReference type="NCBI Taxonomy" id="343509"/>
    <lineage>
        <taxon>Bacteria</taxon>
        <taxon>Pseudomonadati</taxon>
        <taxon>Pseudomonadota</taxon>
        <taxon>Gammaproteobacteria</taxon>
        <taxon>Enterobacterales</taxon>
        <taxon>Bruguierivoracaceae</taxon>
        <taxon>Sodalis</taxon>
    </lineage>
</organism>
<comment type="function">
    <text evidence="1">Together with the chaperonin GroEL, plays an essential role in assisting protein folding. The GroEL-GroES system forms a nano-cage that allows encapsulation of the non-native substrate proteins and provides a physical environment optimized to promote and accelerate protein folding. GroES binds to the apical surface of the GroEL ring, thereby capping the opening of the GroEL channel.</text>
</comment>
<comment type="subunit">
    <text evidence="1">Heptamer of 7 subunits arranged in a ring. Interacts with the chaperonin GroEL.</text>
</comment>
<comment type="subcellular location">
    <subcellularLocation>
        <location evidence="1">Cytoplasm</location>
    </subcellularLocation>
</comment>
<comment type="similarity">
    <text evidence="1">Belongs to the GroES chaperonin family.</text>
</comment>
<feature type="chain" id="PRO_1000025374" description="Co-chaperonin GroES">
    <location>
        <begin position="1"/>
        <end position="97"/>
    </location>
</feature>